<accession>Q8EKV5</accession>
<reference key="1">
    <citation type="journal article" date="2002" name="Nucleic Acids Res.">
        <title>Genome sequence of Oceanobacillus iheyensis isolated from the Iheya Ridge and its unexpected adaptive capabilities to extreme environments.</title>
        <authorList>
            <person name="Takami H."/>
            <person name="Takaki Y."/>
            <person name="Uchiyama I."/>
        </authorList>
    </citation>
    <scope>NUCLEOTIDE SEQUENCE [LARGE SCALE GENOMIC DNA]</scope>
    <source>
        <strain>DSM 14371 / CIP 107618 / JCM 11309 / KCTC 3954 / HTE831</strain>
    </source>
</reference>
<protein>
    <recommendedName>
        <fullName evidence="1">Small ribosomal subunit protein bS18</fullName>
    </recommendedName>
    <alternativeName>
        <fullName evidence="2">30S ribosomal protein S18</fullName>
    </alternativeName>
</protein>
<keyword id="KW-1185">Reference proteome</keyword>
<keyword id="KW-0687">Ribonucleoprotein</keyword>
<keyword id="KW-0689">Ribosomal protein</keyword>
<keyword id="KW-0694">RNA-binding</keyword>
<keyword id="KW-0699">rRNA-binding</keyword>
<gene>
    <name evidence="1" type="primary">rpsR</name>
    <name type="ordered locus">OB3477</name>
</gene>
<sequence>MAARRGRAKRRKVCYFTANGITHIDYKDVDLLRRFISERGKILPRRVTGTSAKYQRKLTIAIKRARTMALLPYVAD</sequence>
<comment type="function">
    <text evidence="1">Binds as a heterodimer with protein bS6 to the central domain of the 16S rRNA, where it helps stabilize the platform of the 30S subunit.</text>
</comment>
<comment type="subunit">
    <text evidence="1">Part of the 30S ribosomal subunit. Forms a tight heterodimer with protein bS6.</text>
</comment>
<comment type="similarity">
    <text evidence="1">Belongs to the bacterial ribosomal protein bS18 family.</text>
</comment>
<dbReference type="EMBL" id="BA000028">
    <property type="protein sequence ID" value="BAC15433.1"/>
    <property type="molecule type" value="Genomic_DNA"/>
</dbReference>
<dbReference type="RefSeq" id="WP_011067875.1">
    <property type="nucleotide sequence ID" value="NC_004193.1"/>
</dbReference>
<dbReference type="SMR" id="Q8EKV5"/>
<dbReference type="STRING" id="221109.gene:10735729"/>
<dbReference type="KEGG" id="oih:OB3477"/>
<dbReference type="eggNOG" id="COG0238">
    <property type="taxonomic scope" value="Bacteria"/>
</dbReference>
<dbReference type="HOGENOM" id="CLU_148710_2_2_9"/>
<dbReference type="OrthoDB" id="9812008at2"/>
<dbReference type="PhylomeDB" id="Q8EKV5"/>
<dbReference type="Proteomes" id="UP000000822">
    <property type="component" value="Chromosome"/>
</dbReference>
<dbReference type="GO" id="GO:0022627">
    <property type="term" value="C:cytosolic small ribosomal subunit"/>
    <property type="evidence" value="ECO:0007669"/>
    <property type="project" value="TreeGrafter"/>
</dbReference>
<dbReference type="GO" id="GO:0070181">
    <property type="term" value="F:small ribosomal subunit rRNA binding"/>
    <property type="evidence" value="ECO:0007669"/>
    <property type="project" value="TreeGrafter"/>
</dbReference>
<dbReference type="GO" id="GO:0003735">
    <property type="term" value="F:structural constituent of ribosome"/>
    <property type="evidence" value="ECO:0007669"/>
    <property type="project" value="InterPro"/>
</dbReference>
<dbReference type="GO" id="GO:0006412">
    <property type="term" value="P:translation"/>
    <property type="evidence" value="ECO:0007669"/>
    <property type="project" value="UniProtKB-UniRule"/>
</dbReference>
<dbReference type="FunFam" id="4.10.640.10:FF:000003">
    <property type="entry name" value="30S ribosomal protein S18"/>
    <property type="match status" value="1"/>
</dbReference>
<dbReference type="Gene3D" id="4.10.640.10">
    <property type="entry name" value="Ribosomal protein S18"/>
    <property type="match status" value="1"/>
</dbReference>
<dbReference type="HAMAP" id="MF_00270">
    <property type="entry name" value="Ribosomal_bS18"/>
    <property type="match status" value="1"/>
</dbReference>
<dbReference type="InterPro" id="IPR001648">
    <property type="entry name" value="Ribosomal_bS18"/>
</dbReference>
<dbReference type="InterPro" id="IPR018275">
    <property type="entry name" value="Ribosomal_bS18_CS"/>
</dbReference>
<dbReference type="InterPro" id="IPR036870">
    <property type="entry name" value="Ribosomal_bS18_sf"/>
</dbReference>
<dbReference type="NCBIfam" id="TIGR00165">
    <property type="entry name" value="S18"/>
    <property type="match status" value="1"/>
</dbReference>
<dbReference type="PANTHER" id="PTHR13479">
    <property type="entry name" value="30S RIBOSOMAL PROTEIN S18"/>
    <property type="match status" value="1"/>
</dbReference>
<dbReference type="PANTHER" id="PTHR13479:SF40">
    <property type="entry name" value="SMALL RIBOSOMAL SUBUNIT PROTEIN BS18M"/>
    <property type="match status" value="1"/>
</dbReference>
<dbReference type="Pfam" id="PF01084">
    <property type="entry name" value="Ribosomal_S18"/>
    <property type="match status" value="1"/>
</dbReference>
<dbReference type="PRINTS" id="PR00974">
    <property type="entry name" value="RIBOSOMALS18"/>
</dbReference>
<dbReference type="SUPFAM" id="SSF46911">
    <property type="entry name" value="Ribosomal protein S18"/>
    <property type="match status" value="1"/>
</dbReference>
<dbReference type="PROSITE" id="PS00057">
    <property type="entry name" value="RIBOSOMAL_S18"/>
    <property type="match status" value="1"/>
</dbReference>
<proteinExistence type="inferred from homology"/>
<name>RS18_OCEIH</name>
<feature type="chain" id="PRO_0000111198" description="Small ribosomal subunit protein bS18">
    <location>
        <begin position="1"/>
        <end position="76"/>
    </location>
</feature>
<organism>
    <name type="scientific">Oceanobacillus iheyensis (strain DSM 14371 / CIP 107618 / JCM 11309 / KCTC 3954 / HTE831)</name>
    <dbReference type="NCBI Taxonomy" id="221109"/>
    <lineage>
        <taxon>Bacteria</taxon>
        <taxon>Bacillati</taxon>
        <taxon>Bacillota</taxon>
        <taxon>Bacilli</taxon>
        <taxon>Bacillales</taxon>
        <taxon>Bacillaceae</taxon>
        <taxon>Oceanobacillus</taxon>
    </lineage>
</organism>
<evidence type="ECO:0000255" key="1">
    <source>
        <dbReference type="HAMAP-Rule" id="MF_00270"/>
    </source>
</evidence>
<evidence type="ECO:0000305" key="2"/>